<protein>
    <recommendedName>
        <fullName evidence="1">ADP-L-glycero-D-manno-heptose-6-epimerase</fullName>
        <ecNumber evidence="1">5.1.3.20</ecNumber>
    </recommendedName>
    <alternativeName>
        <fullName evidence="1">ADP-L-glycero-beta-D-manno-heptose-6-epimerase</fullName>
        <shortName evidence="1">ADP-glyceromanno-heptose 6-epimerase</shortName>
        <shortName evidence="1">ADP-hep 6-epimerase</shortName>
        <shortName evidence="1">AGME</shortName>
    </alternativeName>
</protein>
<sequence>MIIVTGGAGFIGSNIVKALNNIGYKDILVVDNLKDGTKFVNLVDLDIADYMDKEDFVASIVAGDDMGDIDAIFHEGACSSTTEWDGKYMMDNNYQYSKDILHFCLDRSIPFLYASSAATYGGRTDNFIEDRQYEQPLNVYGYSKFLFDQYVREILPQADSQICGFRYFNVYGPREGHKGSMASVAFHLNNQINAGERPKLFAGSENFKRDFIYVGDVADVNLWFWQNGVSGIFNCGTGRAESFQAVADAVVDYHQSGPVEYIEFPEKLKGRYQAYTQADLTKLRAAGYGKPFKTVAEGVKEYLAWLNRSV</sequence>
<gene>
    <name evidence="1" type="primary">hldD</name>
    <name type="ordered locus">YPTB0055</name>
</gene>
<accession>Q66GC7</accession>
<keyword id="KW-0119">Carbohydrate metabolism</keyword>
<keyword id="KW-0413">Isomerase</keyword>
<keyword id="KW-0521">NADP</keyword>
<proteinExistence type="inferred from homology"/>
<dbReference type="EC" id="5.1.3.20" evidence="1"/>
<dbReference type="EMBL" id="BX936398">
    <property type="protein sequence ID" value="CAH19295.1"/>
    <property type="molecule type" value="Genomic_DNA"/>
</dbReference>
<dbReference type="SMR" id="Q66GC7"/>
<dbReference type="KEGG" id="ypo:BZ17_2540"/>
<dbReference type="KEGG" id="yps:YPTB0055"/>
<dbReference type="PATRIC" id="fig|273123.14.peg.2665"/>
<dbReference type="UniPathway" id="UPA00356">
    <property type="reaction ID" value="UER00440"/>
</dbReference>
<dbReference type="Proteomes" id="UP000001011">
    <property type="component" value="Chromosome"/>
</dbReference>
<dbReference type="GO" id="GO:0008712">
    <property type="term" value="F:ADP-glyceromanno-heptose 6-epimerase activity"/>
    <property type="evidence" value="ECO:0007669"/>
    <property type="project" value="UniProtKB-UniRule"/>
</dbReference>
<dbReference type="GO" id="GO:0050661">
    <property type="term" value="F:NADP binding"/>
    <property type="evidence" value="ECO:0007669"/>
    <property type="project" value="InterPro"/>
</dbReference>
<dbReference type="GO" id="GO:0097171">
    <property type="term" value="P:ADP-L-glycero-beta-D-manno-heptose biosynthetic process"/>
    <property type="evidence" value="ECO:0007669"/>
    <property type="project" value="UniProtKB-UniPathway"/>
</dbReference>
<dbReference type="GO" id="GO:0005975">
    <property type="term" value="P:carbohydrate metabolic process"/>
    <property type="evidence" value="ECO:0007669"/>
    <property type="project" value="UniProtKB-UniRule"/>
</dbReference>
<dbReference type="CDD" id="cd05248">
    <property type="entry name" value="ADP_GME_SDR_e"/>
    <property type="match status" value="1"/>
</dbReference>
<dbReference type="Gene3D" id="3.40.50.720">
    <property type="entry name" value="NAD(P)-binding Rossmann-like Domain"/>
    <property type="match status" value="1"/>
</dbReference>
<dbReference type="Gene3D" id="3.90.25.10">
    <property type="entry name" value="UDP-galactose 4-epimerase, domain 1"/>
    <property type="match status" value="1"/>
</dbReference>
<dbReference type="HAMAP" id="MF_01601">
    <property type="entry name" value="Heptose_epimerase"/>
    <property type="match status" value="1"/>
</dbReference>
<dbReference type="InterPro" id="IPR001509">
    <property type="entry name" value="Epimerase_deHydtase"/>
</dbReference>
<dbReference type="InterPro" id="IPR011912">
    <property type="entry name" value="Heptose_epim"/>
</dbReference>
<dbReference type="InterPro" id="IPR036291">
    <property type="entry name" value="NAD(P)-bd_dom_sf"/>
</dbReference>
<dbReference type="NCBIfam" id="TIGR02197">
    <property type="entry name" value="heptose_epim"/>
    <property type="match status" value="1"/>
</dbReference>
<dbReference type="NCBIfam" id="NF008360">
    <property type="entry name" value="PRK11150.1"/>
    <property type="match status" value="1"/>
</dbReference>
<dbReference type="PANTHER" id="PTHR43103:SF3">
    <property type="entry name" value="ADP-L-GLYCERO-D-MANNO-HEPTOSE-6-EPIMERASE"/>
    <property type="match status" value="1"/>
</dbReference>
<dbReference type="PANTHER" id="PTHR43103">
    <property type="entry name" value="NUCLEOSIDE-DIPHOSPHATE-SUGAR EPIMERASE"/>
    <property type="match status" value="1"/>
</dbReference>
<dbReference type="Pfam" id="PF01370">
    <property type="entry name" value="Epimerase"/>
    <property type="match status" value="1"/>
</dbReference>
<dbReference type="SUPFAM" id="SSF51735">
    <property type="entry name" value="NAD(P)-binding Rossmann-fold domains"/>
    <property type="match status" value="1"/>
</dbReference>
<name>HLDD_YERPS</name>
<reference key="1">
    <citation type="journal article" date="2004" name="Proc. Natl. Acad. Sci. U.S.A.">
        <title>Insights into the evolution of Yersinia pestis through whole-genome comparison with Yersinia pseudotuberculosis.</title>
        <authorList>
            <person name="Chain P.S.G."/>
            <person name="Carniel E."/>
            <person name="Larimer F.W."/>
            <person name="Lamerdin J."/>
            <person name="Stoutland P.O."/>
            <person name="Regala W.M."/>
            <person name="Georgescu A.M."/>
            <person name="Vergez L.M."/>
            <person name="Land M.L."/>
            <person name="Motin V.L."/>
            <person name="Brubaker R.R."/>
            <person name="Fowler J."/>
            <person name="Hinnebusch J."/>
            <person name="Marceau M."/>
            <person name="Medigue C."/>
            <person name="Simonet M."/>
            <person name="Chenal-Francisque V."/>
            <person name="Souza B."/>
            <person name="Dacheux D."/>
            <person name="Elliott J.M."/>
            <person name="Derbise A."/>
            <person name="Hauser L.J."/>
            <person name="Garcia E."/>
        </authorList>
    </citation>
    <scope>NUCLEOTIDE SEQUENCE [LARGE SCALE GENOMIC DNA]</scope>
    <source>
        <strain>IP32953</strain>
    </source>
</reference>
<evidence type="ECO:0000255" key="1">
    <source>
        <dbReference type="HAMAP-Rule" id="MF_01601"/>
    </source>
</evidence>
<comment type="function">
    <text evidence="1">Catalyzes the interconversion between ADP-D-glycero-beta-D-manno-heptose and ADP-L-glycero-beta-D-manno-heptose via an epimerization at carbon 6 of the heptose.</text>
</comment>
<comment type="catalytic activity">
    <reaction evidence="1">
        <text>ADP-D-glycero-beta-D-manno-heptose = ADP-L-glycero-beta-D-manno-heptose</text>
        <dbReference type="Rhea" id="RHEA:17577"/>
        <dbReference type="ChEBI" id="CHEBI:59967"/>
        <dbReference type="ChEBI" id="CHEBI:61506"/>
        <dbReference type="EC" id="5.1.3.20"/>
    </reaction>
</comment>
<comment type="cofactor">
    <cofactor evidence="1">
        <name>NADP(+)</name>
        <dbReference type="ChEBI" id="CHEBI:58349"/>
    </cofactor>
    <text evidence="1">Binds 1 NADP(+) per subunit.</text>
</comment>
<comment type="pathway">
    <text evidence="1">Nucleotide-sugar biosynthesis; ADP-L-glycero-beta-D-manno-heptose biosynthesis; ADP-L-glycero-beta-D-manno-heptose from D-glycero-beta-D-manno-heptose 7-phosphate: step 4/4.</text>
</comment>
<comment type="subunit">
    <text evidence="1">Homopentamer.</text>
</comment>
<comment type="domain">
    <text evidence="1">Contains a large N-terminal NADP-binding domain, and a smaller C-terminal substrate-binding domain.</text>
</comment>
<comment type="similarity">
    <text evidence="1">Belongs to the NAD(P)-dependent epimerase/dehydratase family. HldD subfamily.</text>
</comment>
<feature type="chain" id="PRO_0000255750" description="ADP-L-glycero-D-manno-heptose-6-epimerase">
    <location>
        <begin position="1"/>
        <end position="310"/>
    </location>
</feature>
<feature type="active site" description="Proton acceptor" evidence="1">
    <location>
        <position position="140"/>
    </location>
</feature>
<feature type="active site" description="Proton acceptor" evidence="1">
    <location>
        <position position="178"/>
    </location>
</feature>
<feature type="binding site" evidence="1">
    <location>
        <begin position="10"/>
        <end position="11"/>
    </location>
    <ligand>
        <name>NADP(+)</name>
        <dbReference type="ChEBI" id="CHEBI:58349"/>
    </ligand>
</feature>
<feature type="binding site" evidence="1">
    <location>
        <begin position="31"/>
        <end position="32"/>
    </location>
    <ligand>
        <name>NADP(+)</name>
        <dbReference type="ChEBI" id="CHEBI:58349"/>
    </ligand>
</feature>
<feature type="binding site" evidence="1">
    <location>
        <position position="38"/>
    </location>
    <ligand>
        <name>NADP(+)</name>
        <dbReference type="ChEBI" id="CHEBI:58349"/>
    </ligand>
</feature>
<feature type="binding site" evidence="1">
    <location>
        <position position="53"/>
    </location>
    <ligand>
        <name>NADP(+)</name>
        <dbReference type="ChEBI" id="CHEBI:58349"/>
    </ligand>
</feature>
<feature type="binding site" evidence="1">
    <location>
        <begin position="75"/>
        <end position="79"/>
    </location>
    <ligand>
        <name>NADP(+)</name>
        <dbReference type="ChEBI" id="CHEBI:58349"/>
    </ligand>
</feature>
<feature type="binding site" evidence="1">
    <location>
        <position position="92"/>
    </location>
    <ligand>
        <name>NADP(+)</name>
        <dbReference type="ChEBI" id="CHEBI:58349"/>
    </ligand>
</feature>
<feature type="binding site" evidence="1">
    <location>
        <position position="144"/>
    </location>
    <ligand>
        <name>NADP(+)</name>
        <dbReference type="ChEBI" id="CHEBI:58349"/>
    </ligand>
</feature>
<feature type="binding site" evidence="1">
    <location>
        <position position="169"/>
    </location>
    <ligand>
        <name>substrate</name>
    </ligand>
</feature>
<feature type="binding site" evidence="1">
    <location>
        <position position="170"/>
    </location>
    <ligand>
        <name>NADP(+)</name>
        <dbReference type="ChEBI" id="CHEBI:58349"/>
    </ligand>
</feature>
<feature type="binding site" evidence="1">
    <location>
        <position position="178"/>
    </location>
    <ligand>
        <name>NADP(+)</name>
        <dbReference type="ChEBI" id="CHEBI:58349"/>
    </ligand>
</feature>
<feature type="binding site" evidence="1">
    <location>
        <position position="180"/>
    </location>
    <ligand>
        <name>substrate</name>
    </ligand>
</feature>
<feature type="binding site" evidence="1">
    <location>
        <position position="187"/>
    </location>
    <ligand>
        <name>substrate</name>
    </ligand>
</feature>
<feature type="binding site" evidence="1">
    <location>
        <begin position="201"/>
        <end position="204"/>
    </location>
    <ligand>
        <name>substrate</name>
    </ligand>
</feature>
<feature type="binding site" evidence="1">
    <location>
        <position position="209"/>
    </location>
    <ligand>
        <name>substrate</name>
    </ligand>
</feature>
<feature type="binding site" evidence="1">
    <location>
        <position position="272"/>
    </location>
    <ligand>
        <name>substrate</name>
    </ligand>
</feature>
<organism>
    <name type="scientific">Yersinia pseudotuberculosis serotype I (strain IP32953)</name>
    <dbReference type="NCBI Taxonomy" id="273123"/>
    <lineage>
        <taxon>Bacteria</taxon>
        <taxon>Pseudomonadati</taxon>
        <taxon>Pseudomonadota</taxon>
        <taxon>Gammaproteobacteria</taxon>
        <taxon>Enterobacterales</taxon>
        <taxon>Yersiniaceae</taxon>
        <taxon>Yersinia</taxon>
    </lineage>
</organism>